<accession>Q5RB76</accession>
<sequence>MAKTVAYFYDPDVGNFHYGAGHPMKPHRLALTHSLVLHYGLYKKMIVFKPYQASQHDMCRFHSEDYIDFLQRVSPTNMQGFTKSLNAFNVGDDCPVFPGLFEFCSRYTGASLQGATQLNNKICDIAINWAGGLHHAKKFEASGFCYVNDIVIGILELLKYHPRVLYIDIDIHHGDGVQEAFYLTDRVMTVSFHKYGNYFFPGTGDMYEVGAESGRYYCLNVPLRDGIDDQSYKHLFQPVINQVVDFYQPTCIVLQCGADSLGCDRLGCFNLSIRGHGECVEYVKSFNIPLLVLGGGGYTVRNVARCWTYETSLLVEEAISEELPYSEYFEYFAPDFTLHPDVSTRIENQNSRQYLDQIRQTIFENLKMLNHAPSVQIRDVPAGLLTYDRTDEADAEERGPEENYSRPEAPNEFYDGDHDNDKESDVEI</sequence>
<name>HDAC3_PONAB</name>
<evidence type="ECO:0000250" key="1">
    <source>
        <dbReference type="UniProtKB" id="O15379"/>
    </source>
</evidence>
<evidence type="ECO:0000250" key="2">
    <source>
        <dbReference type="UniProtKB" id="O88895"/>
    </source>
</evidence>
<evidence type="ECO:0000250" key="3">
    <source>
        <dbReference type="UniProtKB" id="Q13547"/>
    </source>
</evidence>
<evidence type="ECO:0000256" key="4">
    <source>
        <dbReference type="SAM" id="MobiDB-lite"/>
    </source>
</evidence>
<evidence type="ECO:0000305" key="5"/>
<comment type="function">
    <text evidence="1 2">Histone deacetylase that catalyzes the deacetylation of lysine residues on the N-terminal part of the core histones (H2A, H2B, H3 and H4), and some other non-histone substrates. Histone deacetylation gives a tag for epigenetic repression and plays an important role in transcriptional regulation, cell cycle progression and developmental events. Histone deacetylases act via the formation of large multiprotein complexes, such as N-Cor repressor complex, which activate the histone deacetylase activity. Participates in the BCL6 transcriptional repressor activity by deacetylating the H3 'Lys-27' (H3K27) on enhancer elements, antagonizing EP300 acetyltransferase activity and repressing proximal gene expression (By similarity). Acts as a molecular chaperone for shuttling phosphorylated NR2C1 to PML bodies for sumoylation (By similarity). Contributes, together with XBP1 isoform 1, to the activation of NFE2L2-mediated HMOX1 transcription factor gene expression in a PI(3)K/mTORC2/Akt-dependent signaling pathway leading to endothelial cell (EC) survival under disturbed flow/oxidative stress (By similarity). Regulates both the transcriptional activation and repression phases of the circadian clock in a deacetylase activity-independent manner. During the activation phase, promotes the accumulation of ubiquitinated BMAL1 at the E-boxes and during the repression phase, blocks FBXL3-mediated CRY1/2 ubiquitination and promotes the interaction of CRY1 and BMAL1. The NCOR1-HDAC3 complex regulates the circadian expression of the core clock gene BMAL1 and the genes involved in lipid metabolism in the liver (By similarity). Also functions as a deacetylase for non-histone targets, such as KAT5, MEF2D, MAPK14, RARA and STAT3. Serves as a corepressor of RARA, mediating its deacetylation and repression, leading to inhibition of RARE DNA element binding. In association with RARA, plays a role in the repression of microRNA-10a and thereby in the inflammatory response. In addition to protein deacetylase activity, also acts as a protein-lysine deacylase by recognizing other acyl groups: catalyzes removal of (2E)-butenoyl (crotonyl), lactoyl (lactyl) and 2-hydroxyisobutanoyl (2-hydroxyisobutyryl) acyl groups from lysine residues, leading to protein decrotonylation, delactylation and de-2-hydroxyisobutyrylation, respectively (By similarity). Catalyzes decrotonylation of MAPRE1/EB1 (By similarity). Mediates delactylation NBN/NBS1, thereby inhibiting DNA double-strand breaks (DSBs) via homologous recombination (HR) (By similarity).</text>
</comment>
<comment type="catalytic activity">
    <reaction evidence="1">
        <text>N(6)-acetyl-L-lysyl-[histone] + H2O = L-lysyl-[histone] + acetate</text>
        <dbReference type="Rhea" id="RHEA:58196"/>
        <dbReference type="Rhea" id="RHEA-COMP:9845"/>
        <dbReference type="Rhea" id="RHEA-COMP:11338"/>
        <dbReference type="ChEBI" id="CHEBI:15377"/>
        <dbReference type="ChEBI" id="CHEBI:29969"/>
        <dbReference type="ChEBI" id="CHEBI:30089"/>
        <dbReference type="ChEBI" id="CHEBI:61930"/>
        <dbReference type="EC" id="3.5.1.98"/>
    </reaction>
    <physiologicalReaction direction="left-to-right" evidence="1">
        <dbReference type="Rhea" id="RHEA:58197"/>
    </physiologicalReaction>
</comment>
<comment type="catalytic activity">
    <reaction evidence="1">
        <text>N(6)-acetyl-L-lysyl-[protein] + H2O = L-lysyl-[protein] + acetate</text>
        <dbReference type="Rhea" id="RHEA:58108"/>
        <dbReference type="Rhea" id="RHEA-COMP:9752"/>
        <dbReference type="Rhea" id="RHEA-COMP:10731"/>
        <dbReference type="ChEBI" id="CHEBI:15377"/>
        <dbReference type="ChEBI" id="CHEBI:29969"/>
        <dbReference type="ChEBI" id="CHEBI:30089"/>
        <dbReference type="ChEBI" id="CHEBI:61930"/>
    </reaction>
    <physiologicalReaction direction="left-to-right" evidence="1">
        <dbReference type="Rhea" id="RHEA:58109"/>
    </physiologicalReaction>
</comment>
<comment type="catalytic activity">
    <reaction evidence="1">
        <text>N(6)-(2E)-butenoyl-L-lysyl-[protein] + H2O = (2E)-2-butenoate + L-lysyl-[protein]</text>
        <dbReference type="Rhea" id="RHEA:69172"/>
        <dbReference type="Rhea" id="RHEA-COMP:9752"/>
        <dbReference type="Rhea" id="RHEA-COMP:13707"/>
        <dbReference type="ChEBI" id="CHEBI:15377"/>
        <dbReference type="ChEBI" id="CHEBI:29969"/>
        <dbReference type="ChEBI" id="CHEBI:35899"/>
        <dbReference type="ChEBI" id="CHEBI:137954"/>
    </reaction>
    <physiologicalReaction direction="left-to-right" evidence="1">
        <dbReference type="Rhea" id="RHEA:69173"/>
    </physiologicalReaction>
</comment>
<comment type="catalytic activity">
    <reaction evidence="1">
        <text>N(6)-(2-hydroxyisobutanoyl)-L-lysyl-[protein] + H2O = 2-hydroxy-2-methylpropanoate + L-lysyl-[protein]</text>
        <dbReference type="Rhea" id="RHEA:69176"/>
        <dbReference type="Rhea" id="RHEA-COMP:9752"/>
        <dbReference type="Rhea" id="RHEA-COMP:15921"/>
        <dbReference type="ChEBI" id="CHEBI:15377"/>
        <dbReference type="ChEBI" id="CHEBI:19641"/>
        <dbReference type="ChEBI" id="CHEBI:29969"/>
        <dbReference type="ChEBI" id="CHEBI:144968"/>
    </reaction>
    <physiologicalReaction direction="left-to-right" evidence="1">
        <dbReference type="Rhea" id="RHEA:69177"/>
    </physiologicalReaction>
</comment>
<comment type="catalytic activity">
    <reaction evidence="1">
        <text>N(6)-[(S)-lactoyl]-L-lysyl-[protein] + H2O = (S)-lactate + L-lysyl-[protein]</text>
        <dbReference type="Rhea" id="RHEA:81387"/>
        <dbReference type="Rhea" id="RHEA-COMP:9752"/>
        <dbReference type="Rhea" id="RHEA-COMP:19466"/>
        <dbReference type="ChEBI" id="CHEBI:15377"/>
        <dbReference type="ChEBI" id="CHEBI:16651"/>
        <dbReference type="ChEBI" id="CHEBI:29969"/>
        <dbReference type="ChEBI" id="CHEBI:231527"/>
    </reaction>
    <physiologicalReaction direction="left-to-right" evidence="1">
        <dbReference type="Rhea" id="RHEA:81388"/>
    </physiologicalReaction>
</comment>
<comment type="activity regulation">
    <text evidence="1">Inositol tetraphosphate (1D-myo-inositol 1,4,5,6-tetrakisphosphate) promotes the histone deacetylase activity by acting as an intermolecular glue between HDAC3 and NCOR2, thereby promoting its association with the N-Cor complex, a prerequisite for the histone deacetylase activity.</text>
</comment>
<comment type="subunit">
    <text evidence="1 2">Interacts with HDAC7 and HDAC9. Interacts with HDAC10, DAXX and DACH1. Found in a complex with NCOR1 and NCOR2. Component of the N-Cor repressor complex, at least composed of NCOR1, NCOR2, HDAC3, TBL1X, TBL1R, CORO2A and GPS2. Interacts with BCOR, MJD2A/JHDM3A, NRIP1, PRDM6 and SRY. Interacts with BTBD14B. Interacts with GLIS2. Interacts (via the DNA-binding domain) with NR2C1; the interaction recruits phosphorylated NR2C1 to PML bodies for sumoylation. Component of the Notch corepressor complex. Interacts with CBFA2T3 and NKAP. Interacts with APEX1; the interaction is not dependent on the acetylated status of APEX1. Interacts with and deacetylates MAPK14. Interacts with ZMYND15. Interacts with SMRT/NCOR2 and BCL6 on DNA enhancer elements. Interacts with INSM1. Interacts with XBP1; the interaction occurs in endothelial cell (EC) under disturbed flow. Interacts (via C-terminus) with CCAR2 (via N-terminus). Interacts with and deacetylates MEF2D. Interacts with BEND3. Interacts with NKAPL. Interacts with DHX36; this interaction occurs in a RNA-dependent manner (By similarity). Interacts weakly with CRY1; this interaction is enhanced in the presence of FBXL3 (By similarity). Interacts with FBXL3 and BMAL1 (By similarity). Interacts with NCOR1 (By similarity). Interacts with RARA (By similarity). Interacts with SETD5 (By similarity).</text>
</comment>
<comment type="subcellular location">
    <subcellularLocation>
        <location evidence="1">Nucleus</location>
    </subcellularLocation>
    <subcellularLocation>
        <location evidence="1">Chromosome</location>
    </subcellularLocation>
    <subcellularLocation>
        <location evidence="1">Cytoplasm</location>
    </subcellularLocation>
    <subcellularLocation>
        <location evidence="1">Cytoplasm</location>
        <location evidence="1">Cytosol</location>
    </subcellularLocation>
    <text evidence="1">Colocalizes with XBP1 and AKT1 in the cytoplasm. Predominantly expressed in the nucleus in the presence of CCAR2.</text>
</comment>
<comment type="PTM">
    <text evidence="1">Deubiquitinated on 'Lys-63'-linked ubiquitin chains by USP38; leading to a decreased level of histone acetylation.</text>
</comment>
<comment type="PTM">
    <text evidence="1">Sumoylated in vitro.</text>
</comment>
<comment type="similarity">
    <text evidence="5">Belongs to the histone deacetylase family. HD type 1 subfamily.</text>
</comment>
<proteinExistence type="evidence at transcript level"/>
<protein>
    <recommendedName>
        <fullName>Histone deacetylase 3</fullName>
        <shortName>HD3</shortName>
        <ecNumber evidence="1">3.5.1.98</ecNumber>
    </recommendedName>
    <alternativeName>
        <fullName>Protein deacetylase HDAC3</fullName>
        <ecNumber evidence="1">3.5.1.-</ecNumber>
    </alternativeName>
    <alternativeName>
        <fullName>Protein deacylase HDAC3</fullName>
        <ecNumber evidence="1">3.5.1.-</ecNumber>
    </alternativeName>
</protein>
<reference key="1">
    <citation type="submission" date="2004-11" db="EMBL/GenBank/DDBJ databases">
        <authorList>
            <consortium name="The German cDNA consortium"/>
        </authorList>
    </citation>
    <scope>NUCLEOTIDE SEQUENCE [LARGE SCALE MRNA]</scope>
    <source>
        <tissue>Kidney</tissue>
    </source>
</reference>
<feature type="chain" id="PRO_0000352678" description="Histone deacetylase 3">
    <location>
        <begin position="1"/>
        <end position="428"/>
    </location>
</feature>
<feature type="region of interest" description="Histone deacetylase">
    <location>
        <begin position="3"/>
        <end position="316"/>
    </location>
</feature>
<feature type="region of interest" description="Disordered" evidence="4">
    <location>
        <begin position="388"/>
        <end position="428"/>
    </location>
</feature>
<feature type="compositionally biased region" description="Basic and acidic residues" evidence="4">
    <location>
        <begin position="388"/>
        <end position="405"/>
    </location>
</feature>
<feature type="compositionally biased region" description="Basic and acidic residues" evidence="4">
    <location>
        <begin position="415"/>
        <end position="428"/>
    </location>
</feature>
<feature type="active site" evidence="3">
    <location>
        <position position="135"/>
    </location>
</feature>
<feature type="binding site" evidence="1">
    <location>
        <position position="17"/>
    </location>
    <ligand>
        <name>1D-myo-inositol 1,4,5,6-tetrakisphosphate</name>
        <dbReference type="ChEBI" id="CHEBI:57627"/>
    </ligand>
</feature>
<feature type="binding site" evidence="1">
    <location>
        <position position="21"/>
    </location>
    <ligand>
        <name>1D-myo-inositol 1,4,5,6-tetrakisphosphate</name>
        <dbReference type="ChEBI" id="CHEBI:57627"/>
    </ligand>
</feature>
<feature type="binding site" evidence="1">
    <location>
        <position position="25"/>
    </location>
    <ligand>
        <name>1D-myo-inositol 1,4,5,6-tetrakisphosphate</name>
        <dbReference type="ChEBI" id="CHEBI:57627"/>
    </ligand>
</feature>
<feature type="binding site" evidence="1">
    <location>
        <position position="170"/>
    </location>
    <ligand>
        <name>Zn(2+)</name>
        <dbReference type="ChEBI" id="CHEBI:29105"/>
    </ligand>
</feature>
<feature type="binding site" evidence="1">
    <location>
        <position position="172"/>
    </location>
    <ligand>
        <name>Zn(2+)</name>
        <dbReference type="ChEBI" id="CHEBI:29105"/>
    </ligand>
</feature>
<feature type="binding site" evidence="1">
    <location>
        <position position="259"/>
    </location>
    <ligand>
        <name>Zn(2+)</name>
        <dbReference type="ChEBI" id="CHEBI:29105"/>
    </ligand>
</feature>
<feature type="binding site" evidence="1">
    <location>
        <position position="265"/>
    </location>
    <ligand>
        <name>1D-myo-inositol 1,4,5,6-tetrakisphosphate</name>
        <dbReference type="ChEBI" id="CHEBI:57627"/>
    </ligand>
</feature>
<feature type="modified residue" description="Phosphoserine" evidence="1">
    <location>
        <position position="424"/>
    </location>
</feature>
<organism>
    <name type="scientific">Pongo abelii</name>
    <name type="common">Sumatran orangutan</name>
    <name type="synonym">Pongo pygmaeus abelii</name>
    <dbReference type="NCBI Taxonomy" id="9601"/>
    <lineage>
        <taxon>Eukaryota</taxon>
        <taxon>Metazoa</taxon>
        <taxon>Chordata</taxon>
        <taxon>Craniata</taxon>
        <taxon>Vertebrata</taxon>
        <taxon>Euteleostomi</taxon>
        <taxon>Mammalia</taxon>
        <taxon>Eutheria</taxon>
        <taxon>Euarchontoglires</taxon>
        <taxon>Primates</taxon>
        <taxon>Haplorrhini</taxon>
        <taxon>Catarrhini</taxon>
        <taxon>Hominidae</taxon>
        <taxon>Pongo</taxon>
    </lineage>
</organism>
<dbReference type="EC" id="3.5.1.98" evidence="1"/>
<dbReference type="EC" id="3.5.1.-" evidence="1"/>
<dbReference type="EMBL" id="CR858777">
    <property type="protein sequence ID" value="CAH90984.1"/>
    <property type="molecule type" value="mRNA"/>
</dbReference>
<dbReference type="RefSeq" id="NP_001125568.1">
    <property type="nucleotide sequence ID" value="NM_001132096.1"/>
</dbReference>
<dbReference type="SMR" id="Q5RB76"/>
<dbReference type="STRING" id="9601.ENSPPYP00000017772"/>
<dbReference type="GeneID" id="100172482"/>
<dbReference type="KEGG" id="pon:100172482"/>
<dbReference type="CTD" id="8841"/>
<dbReference type="eggNOG" id="KOG1342">
    <property type="taxonomic scope" value="Eukaryota"/>
</dbReference>
<dbReference type="InParanoid" id="Q5RB76"/>
<dbReference type="OrthoDB" id="1918432at2759"/>
<dbReference type="Proteomes" id="UP000001595">
    <property type="component" value="Unplaced"/>
</dbReference>
<dbReference type="GO" id="GO:0005694">
    <property type="term" value="C:chromosome"/>
    <property type="evidence" value="ECO:0007669"/>
    <property type="project" value="UniProtKB-SubCell"/>
</dbReference>
<dbReference type="GO" id="GO:0005737">
    <property type="term" value="C:cytoplasm"/>
    <property type="evidence" value="ECO:0000250"/>
    <property type="project" value="UniProtKB"/>
</dbReference>
<dbReference type="GO" id="GO:0005829">
    <property type="term" value="C:cytosol"/>
    <property type="evidence" value="ECO:0000250"/>
    <property type="project" value="UniProtKB"/>
</dbReference>
<dbReference type="GO" id="GO:0005634">
    <property type="term" value="C:nucleus"/>
    <property type="evidence" value="ECO:0000250"/>
    <property type="project" value="UniProtKB"/>
</dbReference>
<dbReference type="GO" id="GO:0017053">
    <property type="term" value="C:transcription repressor complex"/>
    <property type="evidence" value="ECO:0000250"/>
    <property type="project" value="UniProtKB"/>
</dbReference>
<dbReference type="GO" id="GO:0003682">
    <property type="term" value="F:chromatin binding"/>
    <property type="evidence" value="ECO:0000250"/>
    <property type="project" value="UniProtKB"/>
</dbReference>
<dbReference type="GO" id="GO:0141221">
    <property type="term" value="F:histone deacetylase activity, hydrolytic mechanism"/>
    <property type="evidence" value="ECO:0007669"/>
    <property type="project" value="UniProtKB-EC"/>
</dbReference>
<dbReference type="GO" id="GO:0160009">
    <property type="term" value="F:histone decrotonylase activity"/>
    <property type="evidence" value="ECO:0000250"/>
    <property type="project" value="UniProtKB"/>
</dbReference>
<dbReference type="GO" id="GO:0046872">
    <property type="term" value="F:metal ion binding"/>
    <property type="evidence" value="ECO:0007669"/>
    <property type="project" value="UniProtKB-KW"/>
</dbReference>
<dbReference type="GO" id="GO:0160010">
    <property type="term" value="F:protein de-2-hydroxyisobutyrylase activity"/>
    <property type="evidence" value="ECO:0000250"/>
    <property type="project" value="UniProtKB"/>
</dbReference>
<dbReference type="GO" id="GO:0160008">
    <property type="term" value="F:protein decrotonylase activity"/>
    <property type="evidence" value="ECO:0000250"/>
    <property type="project" value="UniProtKB"/>
</dbReference>
<dbReference type="GO" id="GO:0033558">
    <property type="term" value="F:protein lysine deacetylase activity"/>
    <property type="evidence" value="ECO:0000250"/>
    <property type="project" value="UniProtKB"/>
</dbReference>
<dbReference type="GO" id="GO:0160216">
    <property type="term" value="F:protein lysine delactylase activity"/>
    <property type="evidence" value="ECO:0000250"/>
    <property type="project" value="UniProtKB"/>
</dbReference>
<dbReference type="GO" id="GO:0003714">
    <property type="term" value="F:transcription corepressor activity"/>
    <property type="evidence" value="ECO:0000250"/>
    <property type="project" value="UniProtKB"/>
</dbReference>
<dbReference type="GO" id="GO:0071498">
    <property type="term" value="P:cellular response to fluid shear stress"/>
    <property type="evidence" value="ECO:0000250"/>
    <property type="project" value="UniProtKB"/>
</dbReference>
<dbReference type="GO" id="GO:0032922">
    <property type="term" value="P:circadian regulation of gene expression"/>
    <property type="evidence" value="ECO:0000250"/>
    <property type="project" value="UniProtKB"/>
</dbReference>
<dbReference type="GO" id="GO:0040029">
    <property type="term" value="P:epigenetic regulation of gene expression"/>
    <property type="evidence" value="ECO:0007669"/>
    <property type="project" value="TreeGrafter"/>
</dbReference>
<dbReference type="GO" id="GO:0000122">
    <property type="term" value="P:negative regulation of transcription by RNA polymerase II"/>
    <property type="evidence" value="ECO:0000250"/>
    <property type="project" value="UniProtKB"/>
</dbReference>
<dbReference type="GO" id="GO:0042307">
    <property type="term" value="P:positive regulation of protein import into nucleus"/>
    <property type="evidence" value="ECO:0000250"/>
    <property type="project" value="UniProtKB"/>
</dbReference>
<dbReference type="GO" id="GO:0001934">
    <property type="term" value="P:positive regulation of protein phosphorylation"/>
    <property type="evidence" value="ECO:0000250"/>
    <property type="project" value="UniProtKB"/>
</dbReference>
<dbReference type="GO" id="GO:0031398">
    <property type="term" value="P:positive regulation of protein ubiquitination"/>
    <property type="evidence" value="ECO:0000250"/>
    <property type="project" value="UniProtKB"/>
</dbReference>
<dbReference type="GO" id="GO:0032008">
    <property type="term" value="P:positive regulation of TOR signaling"/>
    <property type="evidence" value="ECO:0000250"/>
    <property type="project" value="UniProtKB"/>
</dbReference>
<dbReference type="GO" id="GO:0045944">
    <property type="term" value="P:positive regulation of transcription by RNA polymerase II"/>
    <property type="evidence" value="ECO:0000250"/>
    <property type="project" value="UniProtKB"/>
</dbReference>
<dbReference type="GO" id="GO:0006476">
    <property type="term" value="P:protein deacetylation"/>
    <property type="evidence" value="ECO:0000250"/>
    <property type="project" value="UniProtKB"/>
</dbReference>
<dbReference type="GO" id="GO:0042752">
    <property type="term" value="P:regulation of circadian rhythm"/>
    <property type="evidence" value="ECO:0000250"/>
    <property type="project" value="UniProtKB"/>
</dbReference>
<dbReference type="GO" id="GO:0031647">
    <property type="term" value="P:regulation of protein stability"/>
    <property type="evidence" value="ECO:0000250"/>
    <property type="project" value="UniProtKB"/>
</dbReference>
<dbReference type="CDD" id="cd10005">
    <property type="entry name" value="HDAC3"/>
    <property type="match status" value="1"/>
</dbReference>
<dbReference type="FunFam" id="3.40.800.20:FF:000004">
    <property type="entry name" value="Histone deacetylase"/>
    <property type="match status" value="1"/>
</dbReference>
<dbReference type="Gene3D" id="3.40.800.20">
    <property type="entry name" value="Histone deacetylase domain"/>
    <property type="match status" value="1"/>
</dbReference>
<dbReference type="InterPro" id="IPR050284">
    <property type="entry name" value="HDAC_PDAC"/>
</dbReference>
<dbReference type="InterPro" id="IPR000286">
    <property type="entry name" value="His_deacetylse"/>
</dbReference>
<dbReference type="InterPro" id="IPR003084">
    <property type="entry name" value="His_deacetylse_1"/>
</dbReference>
<dbReference type="InterPro" id="IPR023801">
    <property type="entry name" value="His_deacetylse_dom"/>
</dbReference>
<dbReference type="InterPro" id="IPR037138">
    <property type="entry name" value="His_deacetylse_dom_sf"/>
</dbReference>
<dbReference type="InterPro" id="IPR023696">
    <property type="entry name" value="Ureohydrolase_dom_sf"/>
</dbReference>
<dbReference type="PANTHER" id="PTHR10625:SF36">
    <property type="entry name" value="HISTONE DEACETYLASE 3"/>
    <property type="match status" value="1"/>
</dbReference>
<dbReference type="PANTHER" id="PTHR10625">
    <property type="entry name" value="HISTONE DEACETYLASE HDAC1-RELATED"/>
    <property type="match status" value="1"/>
</dbReference>
<dbReference type="Pfam" id="PF00850">
    <property type="entry name" value="Hist_deacetyl"/>
    <property type="match status" value="1"/>
</dbReference>
<dbReference type="PIRSF" id="PIRSF037913">
    <property type="entry name" value="His_deacetylse_1"/>
    <property type="match status" value="1"/>
</dbReference>
<dbReference type="PRINTS" id="PR01270">
    <property type="entry name" value="HDASUPER"/>
</dbReference>
<dbReference type="PRINTS" id="PR01271">
    <property type="entry name" value="HISDACETLASE"/>
</dbReference>
<dbReference type="SUPFAM" id="SSF52768">
    <property type="entry name" value="Arginase/deacetylase"/>
    <property type="match status" value="1"/>
</dbReference>
<keyword id="KW-0090">Biological rhythms</keyword>
<keyword id="KW-0156">Chromatin regulator</keyword>
<keyword id="KW-0158">Chromosome</keyword>
<keyword id="KW-0963">Cytoplasm</keyword>
<keyword id="KW-0378">Hydrolase</keyword>
<keyword id="KW-0479">Metal-binding</keyword>
<keyword id="KW-0539">Nucleus</keyword>
<keyword id="KW-0597">Phosphoprotein</keyword>
<keyword id="KW-1185">Reference proteome</keyword>
<keyword id="KW-0678">Repressor</keyword>
<keyword id="KW-0804">Transcription</keyword>
<keyword id="KW-0805">Transcription regulation</keyword>
<keyword id="KW-0832">Ubl conjugation</keyword>
<keyword id="KW-0862">Zinc</keyword>
<gene>
    <name type="primary">HDAC3</name>
</gene>